<sequence length="295" mass="31173">MNESESEIQARLLAQALPFMQRYENKTIVVKYGGHAMGNPELGKAFASDIALLKQSGVNPIVVHGGGPQIGAMLNKMGIESKFEGGLRVTDQKTVEIVEMVLAGSINKEIVALINQTGEWAIGLCGKDGNMVFAEKARKTIKDPDSNIERVLDLGFVGEVVEVDRTLLDLLARSEMIPVIAPVAPGRDGATYNINADTFAGAIAGALNATRLLFLTDVPGVLDKNGQLIKELSVAEAHALIADGTISGGMIPKVETCIDAIKAGVQGVVILNGKTAHSVLLEIFTEHGIGTLIVP</sequence>
<feature type="chain" id="PRO_1000092874" description="Acetylglutamate kinase">
    <location>
        <begin position="1"/>
        <end position="295"/>
    </location>
</feature>
<feature type="binding site" evidence="1">
    <location>
        <begin position="66"/>
        <end position="67"/>
    </location>
    <ligand>
        <name>substrate</name>
    </ligand>
</feature>
<feature type="binding site" evidence="1">
    <location>
        <position position="88"/>
    </location>
    <ligand>
        <name>substrate</name>
    </ligand>
</feature>
<feature type="binding site" evidence="1">
    <location>
        <position position="193"/>
    </location>
    <ligand>
        <name>substrate</name>
    </ligand>
</feature>
<feature type="site" description="Transition state stabilizer" evidence="1">
    <location>
        <position position="31"/>
    </location>
</feature>
<feature type="site" description="Transition state stabilizer" evidence="1">
    <location>
        <position position="253"/>
    </location>
</feature>
<comment type="function">
    <text evidence="1">Catalyzes the ATP-dependent phosphorylation of N-acetyl-L-glutamate.</text>
</comment>
<comment type="catalytic activity">
    <reaction evidence="1">
        <text>N-acetyl-L-glutamate + ATP = N-acetyl-L-glutamyl 5-phosphate + ADP</text>
        <dbReference type="Rhea" id="RHEA:14629"/>
        <dbReference type="ChEBI" id="CHEBI:30616"/>
        <dbReference type="ChEBI" id="CHEBI:44337"/>
        <dbReference type="ChEBI" id="CHEBI:57936"/>
        <dbReference type="ChEBI" id="CHEBI:456216"/>
        <dbReference type="EC" id="2.7.2.8"/>
    </reaction>
</comment>
<comment type="pathway">
    <text evidence="1">Amino-acid biosynthesis; L-arginine biosynthesis; N(2)-acetyl-L-ornithine from L-glutamate: step 2/4.</text>
</comment>
<comment type="subcellular location">
    <subcellularLocation>
        <location evidence="1">Cytoplasm</location>
    </subcellularLocation>
</comment>
<comment type="similarity">
    <text evidence="1">Belongs to the acetylglutamate kinase family. ArgB subfamily.</text>
</comment>
<keyword id="KW-0028">Amino-acid biosynthesis</keyword>
<keyword id="KW-0055">Arginine biosynthesis</keyword>
<keyword id="KW-0067">ATP-binding</keyword>
<keyword id="KW-0963">Cytoplasm</keyword>
<keyword id="KW-0418">Kinase</keyword>
<keyword id="KW-0547">Nucleotide-binding</keyword>
<keyword id="KW-0808">Transferase</keyword>
<organism>
    <name type="scientific">Rhizobium etli (strain CIAT 652)</name>
    <dbReference type="NCBI Taxonomy" id="491916"/>
    <lineage>
        <taxon>Bacteria</taxon>
        <taxon>Pseudomonadati</taxon>
        <taxon>Pseudomonadota</taxon>
        <taxon>Alphaproteobacteria</taxon>
        <taxon>Hyphomicrobiales</taxon>
        <taxon>Rhizobiaceae</taxon>
        <taxon>Rhizobium/Agrobacterium group</taxon>
        <taxon>Rhizobium</taxon>
    </lineage>
</organism>
<protein>
    <recommendedName>
        <fullName evidence="1">Acetylglutamate kinase</fullName>
        <ecNumber evidence="1">2.7.2.8</ecNumber>
    </recommendedName>
    <alternativeName>
        <fullName evidence="1">N-acetyl-L-glutamate 5-phosphotransferase</fullName>
    </alternativeName>
    <alternativeName>
        <fullName evidence="1">NAG kinase</fullName>
        <shortName evidence="1">NAGK</shortName>
    </alternativeName>
</protein>
<dbReference type="EC" id="2.7.2.8" evidence="1"/>
<dbReference type="EMBL" id="CP001074">
    <property type="protein sequence ID" value="ACE89463.1"/>
    <property type="molecule type" value="Genomic_DNA"/>
</dbReference>
<dbReference type="SMR" id="B3Q031"/>
<dbReference type="KEGG" id="rec:RHECIAT_CH0000469"/>
<dbReference type="eggNOG" id="COG0548">
    <property type="taxonomic scope" value="Bacteria"/>
</dbReference>
<dbReference type="HOGENOM" id="CLU_053680_0_0_5"/>
<dbReference type="UniPathway" id="UPA00068">
    <property type="reaction ID" value="UER00107"/>
</dbReference>
<dbReference type="Proteomes" id="UP000008817">
    <property type="component" value="Chromosome"/>
</dbReference>
<dbReference type="GO" id="GO:0005737">
    <property type="term" value="C:cytoplasm"/>
    <property type="evidence" value="ECO:0007669"/>
    <property type="project" value="UniProtKB-SubCell"/>
</dbReference>
<dbReference type="GO" id="GO:0003991">
    <property type="term" value="F:acetylglutamate kinase activity"/>
    <property type="evidence" value="ECO:0007669"/>
    <property type="project" value="UniProtKB-UniRule"/>
</dbReference>
<dbReference type="GO" id="GO:0005524">
    <property type="term" value="F:ATP binding"/>
    <property type="evidence" value="ECO:0007669"/>
    <property type="project" value="UniProtKB-UniRule"/>
</dbReference>
<dbReference type="GO" id="GO:0042450">
    <property type="term" value="P:arginine biosynthetic process via ornithine"/>
    <property type="evidence" value="ECO:0007669"/>
    <property type="project" value="UniProtKB-UniRule"/>
</dbReference>
<dbReference type="GO" id="GO:0006526">
    <property type="term" value="P:L-arginine biosynthetic process"/>
    <property type="evidence" value="ECO:0007669"/>
    <property type="project" value="UniProtKB-UniPathway"/>
</dbReference>
<dbReference type="CDD" id="cd04250">
    <property type="entry name" value="AAK_NAGK-C"/>
    <property type="match status" value="1"/>
</dbReference>
<dbReference type="FunFam" id="3.40.1160.10:FF:000004">
    <property type="entry name" value="Acetylglutamate kinase"/>
    <property type="match status" value="1"/>
</dbReference>
<dbReference type="Gene3D" id="3.40.1160.10">
    <property type="entry name" value="Acetylglutamate kinase-like"/>
    <property type="match status" value="1"/>
</dbReference>
<dbReference type="HAMAP" id="MF_00082">
    <property type="entry name" value="ArgB"/>
    <property type="match status" value="1"/>
</dbReference>
<dbReference type="InterPro" id="IPR036393">
    <property type="entry name" value="AceGlu_kinase-like_sf"/>
</dbReference>
<dbReference type="InterPro" id="IPR004662">
    <property type="entry name" value="AcgluKinase_fam"/>
</dbReference>
<dbReference type="InterPro" id="IPR037528">
    <property type="entry name" value="ArgB"/>
</dbReference>
<dbReference type="InterPro" id="IPR001048">
    <property type="entry name" value="Asp/Glu/Uridylate_kinase"/>
</dbReference>
<dbReference type="InterPro" id="IPR001057">
    <property type="entry name" value="Glu/AcGlu_kinase"/>
</dbReference>
<dbReference type="InterPro" id="IPR041727">
    <property type="entry name" value="NAGK-C"/>
</dbReference>
<dbReference type="NCBIfam" id="TIGR00761">
    <property type="entry name" value="argB"/>
    <property type="match status" value="1"/>
</dbReference>
<dbReference type="PANTHER" id="PTHR23342">
    <property type="entry name" value="N-ACETYLGLUTAMATE SYNTHASE"/>
    <property type="match status" value="1"/>
</dbReference>
<dbReference type="PANTHER" id="PTHR23342:SF0">
    <property type="entry name" value="N-ACETYLGLUTAMATE SYNTHASE, MITOCHONDRIAL"/>
    <property type="match status" value="1"/>
</dbReference>
<dbReference type="Pfam" id="PF00696">
    <property type="entry name" value="AA_kinase"/>
    <property type="match status" value="1"/>
</dbReference>
<dbReference type="PIRSF" id="PIRSF000728">
    <property type="entry name" value="NAGK"/>
    <property type="match status" value="1"/>
</dbReference>
<dbReference type="PRINTS" id="PR00474">
    <property type="entry name" value="GLU5KINASE"/>
</dbReference>
<dbReference type="SUPFAM" id="SSF53633">
    <property type="entry name" value="Carbamate kinase-like"/>
    <property type="match status" value="1"/>
</dbReference>
<accession>B3Q031</accession>
<proteinExistence type="inferred from homology"/>
<reference key="1">
    <citation type="journal article" date="2010" name="Appl. Environ. Microbiol.">
        <title>Conserved symbiotic plasmid DNA sequences in the multireplicon pangenomic structure of Rhizobium etli.</title>
        <authorList>
            <person name="Gonzalez V."/>
            <person name="Acosta J.L."/>
            <person name="Santamaria R.I."/>
            <person name="Bustos P."/>
            <person name="Fernandez J.L."/>
            <person name="Hernandez Gonzalez I.L."/>
            <person name="Diaz R."/>
            <person name="Flores M."/>
            <person name="Palacios R."/>
            <person name="Mora J."/>
            <person name="Davila G."/>
        </authorList>
    </citation>
    <scope>NUCLEOTIDE SEQUENCE [LARGE SCALE GENOMIC DNA]</scope>
    <source>
        <strain>CIAT 652</strain>
    </source>
</reference>
<name>ARGB_RHIE6</name>
<gene>
    <name evidence="1" type="primary">argB</name>
    <name type="ordered locus">RHECIAT_CH0000469</name>
</gene>
<evidence type="ECO:0000255" key="1">
    <source>
        <dbReference type="HAMAP-Rule" id="MF_00082"/>
    </source>
</evidence>